<protein>
    <recommendedName>
        <fullName evidence="1">Cell division topological specificity factor</fullName>
    </recommendedName>
</protein>
<sequence length="88" mass="9970">MSLLDYFRSTKKPNTASLAKERLQIIVAHQRSGRGGGAPEYLPKMKQEIIEVIRKYVQISEDQVSVQLDQNDDNLSVLELNVTLPDTK</sequence>
<accession>Q12NR5</accession>
<name>MINE_SHEDO</name>
<comment type="function">
    <text evidence="1">Prevents the cell division inhibition by proteins MinC and MinD at internal division sites while permitting inhibition at polar sites. This ensures cell division at the proper site by restricting the formation of a division septum at the midpoint of the long axis of the cell.</text>
</comment>
<comment type="similarity">
    <text evidence="1">Belongs to the MinE family.</text>
</comment>
<reference key="1">
    <citation type="submission" date="2006-03" db="EMBL/GenBank/DDBJ databases">
        <title>Complete sequence of Shewanella denitrificans OS217.</title>
        <authorList>
            <consortium name="US DOE Joint Genome Institute"/>
            <person name="Copeland A."/>
            <person name="Lucas S."/>
            <person name="Lapidus A."/>
            <person name="Barry K."/>
            <person name="Detter J.C."/>
            <person name="Glavina del Rio T."/>
            <person name="Hammon N."/>
            <person name="Israni S."/>
            <person name="Dalin E."/>
            <person name="Tice H."/>
            <person name="Pitluck S."/>
            <person name="Brettin T."/>
            <person name="Bruce D."/>
            <person name="Han C."/>
            <person name="Tapia R."/>
            <person name="Gilna P."/>
            <person name="Kiss H."/>
            <person name="Schmutz J."/>
            <person name="Larimer F."/>
            <person name="Land M."/>
            <person name="Hauser L."/>
            <person name="Kyrpides N."/>
            <person name="Lykidis A."/>
            <person name="Richardson P."/>
        </authorList>
    </citation>
    <scope>NUCLEOTIDE SEQUENCE [LARGE SCALE GENOMIC DNA]</scope>
    <source>
        <strain>OS217 / ATCC BAA-1090 / DSM 15013</strain>
    </source>
</reference>
<evidence type="ECO:0000255" key="1">
    <source>
        <dbReference type="HAMAP-Rule" id="MF_00262"/>
    </source>
</evidence>
<dbReference type="EMBL" id="CP000302">
    <property type="protein sequence ID" value="ABE54911.1"/>
    <property type="molecule type" value="Genomic_DNA"/>
</dbReference>
<dbReference type="RefSeq" id="WP_011496069.1">
    <property type="nucleotide sequence ID" value="NC_007954.1"/>
</dbReference>
<dbReference type="SMR" id="Q12NR5"/>
<dbReference type="STRING" id="318161.Sden_1627"/>
<dbReference type="KEGG" id="sdn:Sden_1627"/>
<dbReference type="eggNOG" id="COG0851">
    <property type="taxonomic scope" value="Bacteria"/>
</dbReference>
<dbReference type="HOGENOM" id="CLU_137929_2_1_6"/>
<dbReference type="OrthoDB" id="9802655at2"/>
<dbReference type="Proteomes" id="UP000001982">
    <property type="component" value="Chromosome"/>
</dbReference>
<dbReference type="GO" id="GO:0051301">
    <property type="term" value="P:cell division"/>
    <property type="evidence" value="ECO:0007669"/>
    <property type="project" value="UniProtKB-KW"/>
</dbReference>
<dbReference type="GO" id="GO:0032955">
    <property type="term" value="P:regulation of division septum assembly"/>
    <property type="evidence" value="ECO:0007669"/>
    <property type="project" value="InterPro"/>
</dbReference>
<dbReference type="FunFam" id="3.30.1070.10:FF:000001">
    <property type="entry name" value="Cell division topological specificity factor"/>
    <property type="match status" value="1"/>
</dbReference>
<dbReference type="Gene3D" id="3.30.1070.10">
    <property type="entry name" value="Cell division topological specificity factor MinE"/>
    <property type="match status" value="1"/>
</dbReference>
<dbReference type="HAMAP" id="MF_00262">
    <property type="entry name" value="MinE"/>
    <property type="match status" value="1"/>
</dbReference>
<dbReference type="InterPro" id="IPR005527">
    <property type="entry name" value="MinE"/>
</dbReference>
<dbReference type="InterPro" id="IPR036707">
    <property type="entry name" value="MinE_sf"/>
</dbReference>
<dbReference type="NCBIfam" id="TIGR01215">
    <property type="entry name" value="minE"/>
    <property type="match status" value="1"/>
</dbReference>
<dbReference type="NCBIfam" id="NF001422">
    <property type="entry name" value="PRK00296.1"/>
    <property type="match status" value="1"/>
</dbReference>
<dbReference type="Pfam" id="PF03776">
    <property type="entry name" value="MinE"/>
    <property type="match status" value="1"/>
</dbReference>
<dbReference type="SUPFAM" id="SSF55229">
    <property type="entry name" value="Cell division protein MinE topological specificity domain"/>
    <property type="match status" value="1"/>
</dbReference>
<organism>
    <name type="scientific">Shewanella denitrificans (strain OS217 / ATCC BAA-1090 / DSM 15013)</name>
    <dbReference type="NCBI Taxonomy" id="318161"/>
    <lineage>
        <taxon>Bacteria</taxon>
        <taxon>Pseudomonadati</taxon>
        <taxon>Pseudomonadota</taxon>
        <taxon>Gammaproteobacteria</taxon>
        <taxon>Alteromonadales</taxon>
        <taxon>Shewanellaceae</taxon>
        <taxon>Shewanella</taxon>
    </lineage>
</organism>
<feature type="chain" id="PRO_0000298181" description="Cell division topological specificity factor">
    <location>
        <begin position="1"/>
        <end position="88"/>
    </location>
</feature>
<keyword id="KW-0131">Cell cycle</keyword>
<keyword id="KW-0132">Cell division</keyword>
<keyword id="KW-1185">Reference proteome</keyword>
<proteinExistence type="inferred from homology"/>
<gene>
    <name evidence="1" type="primary">minE</name>
    <name type="ordered locus">Sden_1627</name>
</gene>